<comment type="function">
    <text evidence="1">Involved in the biosynthesis of isopentenyl diphosphate (IPP) and dimethylallyl diphosphate (DMAPP), two major building blocks of isoprenoid compounds. Catalyzes the conversion of 4-diphosphocytidyl-2-C-methyl-D-erythritol 2-phosphate (CDP-ME2P) to 2-C-methyl-D-erythritol 2,4-cyclodiphosphate (ME-CPP) with a corresponding release of cytidine 5-monophosphate (CMP).</text>
</comment>
<comment type="catalytic activity">
    <reaction evidence="1">
        <text>4-CDP-2-C-methyl-D-erythritol 2-phosphate = 2-C-methyl-D-erythritol 2,4-cyclic diphosphate + CMP</text>
        <dbReference type="Rhea" id="RHEA:23864"/>
        <dbReference type="ChEBI" id="CHEBI:57919"/>
        <dbReference type="ChEBI" id="CHEBI:58483"/>
        <dbReference type="ChEBI" id="CHEBI:60377"/>
        <dbReference type="EC" id="4.6.1.12"/>
    </reaction>
</comment>
<comment type="cofactor">
    <cofactor evidence="1">
        <name>a divalent metal cation</name>
        <dbReference type="ChEBI" id="CHEBI:60240"/>
    </cofactor>
    <text evidence="1">Binds 1 divalent metal cation per subunit.</text>
</comment>
<comment type="pathway">
    <text evidence="1">Isoprenoid biosynthesis; isopentenyl diphosphate biosynthesis via DXP pathway; isopentenyl diphosphate from 1-deoxy-D-xylulose 5-phosphate: step 4/6.</text>
</comment>
<comment type="subunit">
    <text evidence="1">Homotrimer.</text>
</comment>
<comment type="similarity">
    <text evidence="1">Belongs to the IspF family.</text>
</comment>
<feature type="chain" id="PRO_1000022836" description="2-C-methyl-D-erythritol 2,4-cyclodiphosphate synthase">
    <location>
        <begin position="1"/>
        <end position="159"/>
    </location>
</feature>
<feature type="binding site" evidence="1">
    <location>
        <begin position="10"/>
        <end position="12"/>
    </location>
    <ligand>
        <name>4-CDP-2-C-methyl-D-erythritol 2-phosphate</name>
        <dbReference type="ChEBI" id="CHEBI:57919"/>
    </ligand>
</feature>
<feature type="binding site" evidence="1">
    <location>
        <position position="10"/>
    </location>
    <ligand>
        <name>a divalent metal cation</name>
        <dbReference type="ChEBI" id="CHEBI:60240"/>
    </ligand>
</feature>
<feature type="binding site" evidence="1">
    <location>
        <position position="12"/>
    </location>
    <ligand>
        <name>a divalent metal cation</name>
        <dbReference type="ChEBI" id="CHEBI:60240"/>
    </ligand>
</feature>
<feature type="binding site" evidence="1">
    <location>
        <begin position="37"/>
        <end position="38"/>
    </location>
    <ligand>
        <name>4-CDP-2-C-methyl-D-erythritol 2-phosphate</name>
        <dbReference type="ChEBI" id="CHEBI:57919"/>
    </ligand>
</feature>
<feature type="binding site" evidence="1">
    <location>
        <position position="45"/>
    </location>
    <ligand>
        <name>a divalent metal cation</name>
        <dbReference type="ChEBI" id="CHEBI:60240"/>
    </ligand>
</feature>
<feature type="binding site" evidence="1">
    <location>
        <begin position="59"/>
        <end position="61"/>
    </location>
    <ligand>
        <name>4-CDP-2-C-methyl-D-erythritol 2-phosphate</name>
        <dbReference type="ChEBI" id="CHEBI:57919"/>
    </ligand>
</feature>
<feature type="binding site" evidence="1">
    <location>
        <begin position="64"/>
        <end position="68"/>
    </location>
    <ligand>
        <name>4-CDP-2-C-methyl-D-erythritol 2-phosphate</name>
        <dbReference type="ChEBI" id="CHEBI:57919"/>
    </ligand>
</feature>
<feature type="binding site" evidence="1">
    <location>
        <begin position="103"/>
        <end position="109"/>
    </location>
    <ligand>
        <name>4-CDP-2-C-methyl-D-erythritol 2-phosphate</name>
        <dbReference type="ChEBI" id="CHEBI:57919"/>
    </ligand>
</feature>
<feature type="binding site" evidence="1">
    <location>
        <begin position="135"/>
        <end position="138"/>
    </location>
    <ligand>
        <name>4-CDP-2-C-methyl-D-erythritol 2-phosphate</name>
        <dbReference type="ChEBI" id="CHEBI:57919"/>
    </ligand>
</feature>
<feature type="binding site" evidence="1">
    <location>
        <position position="142"/>
    </location>
    <ligand>
        <name>4-CDP-2-C-methyl-D-erythritol 2-phosphate</name>
        <dbReference type="ChEBI" id="CHEBI:57919"/>
    </ligand>
</feature>
<feature type="binding site" evidence="1">
    <location>
        <position position="145"/>
    </location>
    <ligand>
        <name>4-CDP-2-C-methyl-D-erythritol 2-phosphate</name>
        <dbReference type="ChEBI" id="CHEBI:57919"/>
    </ligand>
</feature>
<feature type="site" description="Transition state stabilizer" evidence="1">
    <location>
        <position position="37"/>
    </location>
</feature>
<feature type="site" description="Transition state stabilizer" evidence="1">
    <location>
        <position position="136"/>
    </location>
</feature>
<sequence length="159" mass="17665">MSFRIGHGYDVHKFTSAKQNIIIGGVEIAYHLGLEAHSDGDVLIHALCDAILGALGLGDIGKHFLDTDNQFKNIDSKFFLAEIKKMLDKKQYSISNIDCTIIAQAPKMLPHIEKMRACLANILEIQISQINIKATTTERLGFIGREEGIATHVVCLLYR</sequence>
<gene>
    <name evidence="1" type="primary">ispF</name>
    <name type="ordered locus">FTF1128</name>
</gene>
<reference key="1">
    <citation type="journal article" date="2007" name="PLoS ONE">
        <title>Genome sequencing shows that European isolates of Francisella tularensis subspecies tularensis are almost identical to US laboratory strain Schu S4.</title>
        <authorList>
            <person name="Chaudhuri R.R."/>
            <person name="Ren C.-P."/>
            <person name="Desmond L."/>
            <person name="Vincent G.A."/>
            <person name="Silman N.J."/>
            <person name="Brehm J.K."/>
            <person name="Elmore M.J."/>
            <person name="Hudson M.J."/>
            <person name="Forsman M."/>
            <person name="Isherwood K.E."/>
            <person name="Gurycova D."/>
            <person name="Minton N.P."/>
            <person name="Titball R.W."/>
            <person name="Pallen M.J."/>
            <person name="Vipond R."/>
        </authorList>
    </citation>
    <scope>NUCLEOTIDE SEQUENCE [LARGE SCALE GENOMIC DNA]</scope>
    <source>
        <strain>FSC 198</strain>
    </source>
</reference>
<accession>Q14H93</accession>
<keyword id="KW-0414">Isoprene biosynthesis</keyword>
<keyword id="KW-0456">Lyase</keyword>
<keyword id="KW-0479">Metal-binding</keyword>
<name>ISPF_FRAT1</name>
<protein>
    <recommendedName>
        <fullName evidence="1">2-C-methyl-D-erythritol 2,4-cyclodiphosphate synthase</fullName>
        <shortName evidence="1">MECDP-synthase</shortName>
        <shortName evidence="1">MECPP-synthase</shortName>
        <shortName evidence="1">MECPS</shortName>
        <ecNumber evidence="1">4.6.1.12</ecNumber>
    </recommendedName>
</protein>
<evidence type="ECO:0000255" key="1">
    <source>
        <dbReference type="HAMAP-Rule" id="MF_00107"/>
    </source>
</evidence>
<organism>
    <name type="scientific">Francisella tularensis subsp. tularensis (strain FSC 198)</name>
    <dbReference type="NCBI Taxonomy" id="393115"/>
    <lineage>
        <taxon>Bacteria</taxon>
        <taxon>Pseudomonadati</taxon>
        <taxon>Pseudomonadota</taxon>
        <taxon>Gammaproteobacteria</taxon>
        <taxon>Thiotrichales</taxon>
        <taxon>Francisellaceae</taxon>
        <taxon>Francisella</taxon>
    </lineage>
</organism>
<dbReference type="EC" id="4.6.1.12" evidence="1"/>
<dbReference type="EMBL" id="AM286280">
    <property type="protein sequence ID" value="CAL09144.1"/>
    <property type="molecule type" value="Genomic_DNA"/>
</dbReference>
<dbReference type="RefSeq" id="WP_003021309.1">
    <property type="nucleotide sequence ID" value="NC_008245.1"/>
</dbReference>
<dbReference type="SMR" id="Q14H93"/>
<dbReference type="KEGG" id="ftf:FTF1128"/>
<dbReference type="HOGENOM" id="CLU_084630_2_0_6"/>
<dbReference type="UniPathway" id="UPA00056">
    <property type="reaction ID" value="UER00095"/>
</dbReference>
<dbReference type="GO" id="GO:0008685">
    <property type="term" value="F:2-C-methyl-D-erythritol 2,4-cyclodiphosphate synthase activity"/>
    <property type="evidence" value="ECO:0007669"/>
    <property type="project" value="UniProtKB-UniRule"/>
</dbReference>
<dbReference type="GO" id="GO:0046872">
    <property type="term" value="F:metal ion binding"/>
    <property type="evidence" value="ECO:0007669"/>
    <property type="project" value="UniProtKB-KW"/>
</dbReference>
<dbReference type="GO" id="GO:0019288">
    <property type="term" value="P:isopentenyl diphosphate biosynthetic process, methylerythritol 4-phosphate pathway"/>
    <property type="evidence" value="ECO:0007669"/>
    <property type="project" value="UniProtKB-UniRule"/>
</dbReference>
<dbReference type="GO" id="GO:0016114">
    <property type="term" value="P:terpenoid biosynthetic process"/>
    <property type="evidence" value="ECO:0007669"/>
    <property type="project" value="InterPro"/>
</dbReference>
<dbReference type="CDD" id="cd00554">
    <property type="entry name" value="MECDP_synthase"/>
    <property type="match status" value="1"/>
</dbReference>
<dbReference type="FunFam" id="3.30.1330.50:FF:000001">
    <property type="entry name" value="2-C-methyl-D-erythritol 2,4-cyclodiphosphate synthase"/>
    <property type="match status" value="1"/>
</dbReference>
<dbReference type="Gene3D" id="3.30.1330.50">
    <property type="entry name" value="2-C-methyl-D-erythritol 2,4-cyclodiphosphate synthase"/>
    <property type="match status" value="1"/>
</dbReference>
<dbReference type="HAMAP" id="MF_00107">
    <property type="entry name" value="IspF"/>
    <property type="match status" value="1"/>
</dbReference>
<dbReference type="InterPro" id="IPR003526">
    <property type="entry name" value="MECDP_synthase"/>
</dbReference>
<dbReference type="InterPro" id="IPR020555">
    <property type="entry name" value="MECDP_synthase_CS"/>
</dbReference>
<dbReference type="InterPro" id="IPR036571">
    <property type="entry name" value="MECDP_synthase_sf"/>
</dbReference>
<dbReference type="NCBIfam" id="TIGR00151">
    <property type="entry name" value="ispF"/>
    <property type="match status" value="1"/>
</dbReference>
<dbReference type="PANTHER" id="PTHR43181">
    <property type="entry name" value="2-C-METHYL-D-ERYTHRITOL 2,4-CYCLODIPHOSPHATE SYNTHASE, CHLOROPLASTIC"/>
    <property type="match status" value="1"/>
</dbReference>
<dbReference type="PANTHER" id="PTHR43181:SF1">
    <property type="entry name" value="2-C-METHYL-D-ERYTHRITOL 2,4-CYCLODIPHOSPHATE SYNTHASE, CHLOROPLASTIC"/>
    <property type="match status" value="1"/>
</dbReference>
<dbReference type="Pfam" id="PF02542">
    <property type="entry name" value="YgbB"/>
    <property type="match status" value="1"/>
</dbReference>
<dbReference type="SUPFAM" id="SSF69765">
    <property type="entry name" value="IpsF-like"/>
    <property type="match status" value="1"/>
</dbReference>
<dbReference type="PROSITE" id="PS01350">
    <property type="entry name" value="ISPF"/>
    <property type="match status" value="1"/>
</dbReference>
<proteinExistence type="inferred from homology"/>